<comment type="function">
    <text evidence="1">Involved in DNA repair and RecF pathway recombination.</text>
</comment>
<comment type="similarity">
    <text evidence="1">Belongs to the RecO family.</text>
</comment>
<reference key="1">
    <citation type="journal article" date="2005" name="Genome Res.">
        <title>Coping with cold: the genome of the versatile marine Antarctica bacterium Pseudoalteromonas haloplanktis TAC125.</title>
        <authorList>
            <person name="Medigue C."/>
            <person name="Krin E."/>
            <person name="Pascal G."/>
            <person name="Barbe V."/>
            <person name="Bernsel A."/>
            <person name="Bertin P.N."/>
            <person name="Cheung F."/>
            <person name="Cruveiller S."/>
            <person name="D'Amico S."/>
            <person name="Duilio A."/>
            <person name="Fang G."/>
            <person name="Feller G."/>
            <person name="Ho C."/>
            <person name="Mangenot S."/>
            <person name="Marino G."/>
            <person name="Nilsson J."/>
            <person name="Parrilli E."/>
            <person name="Rocha E.P.C."/>
            <person name="Rouy Z."/>
            <person name="Sekowska A."/>
            <person name="Tutino M.L."/>
            <person name="Vallenet D."/>
            <person name="von Heijne G."/>
            <person name="Danchin A."/>
        </authorList>
    </citation>
    <scope>NUCLEOTIDE SEQUENCE [LARGE SCALE GENOMIC DNA]</scope>
    <source>
        <strain>TAC 125</strain>
    </source>
</reference>
<feature type="chain" id="PRO_1000193413" description="DNA repair protein RecO">
    <location>
        <begin position="1"/>
        <end position="230"/>
    </location>
</feature>
<dbReference type="EMBL" id="CR954246">
    <property type="protein sequence ID" value="CAI85817.1"/>
    <property type="molecule type" value="Genomic_DNA"/>
</dbReference>
<dbReference type="SMR" id="Q3IDL0"/>
<dbReference type="STRING" id="326442.PSHAa0734"/>
<dbReference type="KEGG" id="pha:PSHAa0734"/>
<dbReference type="PATRIC" id="fig|326442.8.peg.697"/>
<dbReference type="eggNOG" id="COG1381">
    <property type="taxonomic scope" value="Bacteria"/>
</dbReference>
<dbReference type="HOGENOM" id="CLU_066645_1_0_6"/>
<dbReference type="BioCyc" id="PHAL326442:PSHA_RS03585-MONOMER"/>
<dbReference type="Proteomes" id="UP000006843">
    <property type="component" value="Chromosome I"/>
</dbReference>
<dbReference type="GO" id="GO:0043590">
    <property type="term" value="C:bacterial nucleoid"/>
    <property type="evidence" value="ECO:0007669"/>
    <property type="project" value="TreeGrafter"/>
</dbReference>
<dbReference type="GO" id="GO:0006310">
    <property type="term" value="P:DNA recombination"/>
    <property type="evidence" value="ECO:0007669"/>
    <property type="project" value="UniProtKB-UniRule"/>
</dbReference>
<dbReference type="GO" id="GO:0006302">
    <property type="term" value="P:double-strand break repair"/>
    <property type="evidence" value="ECO:0007669"/>
    <property type="project" value="TreeGrafter"/>
</dbReference>
<dbReference type="Gene3D" id="2.40.50.140">
    <property type="entry name" value="Nucleic acid-binding proteins"/>
    <property type="match status" value="1"/>
</dbReference>
<dbReference type="Gene3D" id="1.20.1440.120">
    <property type="entry name" value="Recombination protein O, C-terminal domain"/>
    <property type="match status" value="1"/>
</dbReference>
<dbReference type="HAMAP" id="MF_00201">
    <property type="entry name" value="RecO"/>
    <property type="match status" value="1"/>
</dbReference>
<dbReference type="InterPro" id="IPR037278">
    <property type="entry name" value="ARFGAP/RecO"/>
</dbReference>
<dbReference type="InterPro" id="IPR022572">
    <property type="entry name" value="DNA_rep/recomb_RecO_N"/>
</dbReference>
<dbReference type="InterPro" id="IPR012340">
    <property type="entry name" value="NA-bd_OB-fold"/>
</dbReference>
<dbReference type="InterPro" id="IPR003717">
    <property type="entry name" value="RecO"/>
</dbReference>
<dbReference type="InterPro" id="IPR042242">
    <property type="entry name" value="RecO_C"/>
</dbReference>
<dbReference type="NCBIfam" id="TIGR00613">
    <property type="entry name" value="reco"/>
    <property type="match status" value="1"/>
</dbReference>
<dbReference type="PANTHER" id="PTHR33991">
    <property type="entry name" value="DNA REPAIR PROTEIN RECO"/>
    <property type="match status" value="1"/>
</dbReference>
<dbReference type="PANTHER" id="PTHR33991:SF1">
    <property type="entry name" value="DNA REPAIR PROTEIN RECO"/>
    <property type="match status" value="1"/>
</dbReference>
<dbReference type="Pfam" id="PF02565">
    <property type="entry name" value="RecO_C"/>
    <property type="match status" value="1"/>
</dbReference>
<dbReference type="Pfam" id="PF11967">
    <property type="entry name" value="RecO_N"/>
    <property type="match status" value="1"/>
</dbReference>
<dbReference type="SUPFAM" id="SSF57863">
    <property type="entry name" value="ArfGap/RecO-like zinc finger"/>
    <property type="match status" value="1"/>
</dbReference>
<dbReference type="SUPFAM" id="SSF50249">
    <property type="entry name" value="Nucleic acid-binding proteins"/>
    <property type="match status" value="1"/>
</dbReference>
<gene>
    <name evidence="1" type="primary">recO</name>
    <name type="ordered locus">PSHAa0734</name>
</gene>
<protein>
    <recommendedName>
        <fullName evidence="1">DNA repair protein RecO</fullName>
    </recommendedName>
    <alternativeName>
        <fullName evidence="1">Recombination protein O</fullName>
    </alternativeName>
</protein>
<accession>Q3IDL0</accession>
<name>RECO_PSET1</name>
<sequence>MDSDFYRAYLLHRRPYSDSQVMLDMLVEGVGQLRMLARISGRQATKHKAQLQPFQALLVHYNGKYDLKYINKFELHGTPLFLKGDELYCGFYLNELTNRIVPINEPIDQVFQLYNTHLKNLNSGANLQAVLRSYEFQLLELLGYGVDFSFDASGEPIDEKRTYSYFAEVGFLVQDDPRSGFSGLQLNAIANHDFSQADVLYMAKQLSRYLLKPLLGNKPLKSRELFAASQ</sequence>
<organism>
    <name type="scientific">Pseudoalteromonas translucida (strain TAC 125)</name>
    <dbReference type="NCBI Taxonomy" id="326442"/>
    <lineage>
        <taxon>Bacteria</taxon>
        <taxon>Pseudomonadati</taxon>
        <taxon>Pseudomonadota</taxon>
        <taxon>Gammaproteobacteria</taxon>
        <taxon>Alteromonadales</taxon>
        <taxon>Pseudoalteromonadaceae</taxon>
        <taxon>Pseudoalteromonas</taxon>
    </lineage>
</organism>
<proteinExistence type="inferred from homology"/>
<evidence type="ECO:0000255" key="1">
    <source>
        <dbReference type="HAMAP-Rule" id="MF_00201"/>
    </source>
</evidence>
<keyword id="KW-0227">DNA damage</keyword>
<keyword id="KW-0233">DNA recombination</keyword>
<keyword id="KW-0234">DNA repair</keyword>
<keyword id="KW-1185">Reference proteome</keyword>